<evidence type="ECO:0000250" key="1"/>
<evidence type="ECO:0000256" key="2">
    <source>
        <dbReference type="SAM" id="MobiDB-lite"/>
    </source>
</evidence>
<evidence type="ECO:0000305" key="3"/>
<feature type="chain" id="PRO_0000404584" description="RBPJ-interacting and tubulin-associated protein 1">
    <location>
        <begin position="1"/>
        <end position="269"/>
    </location>
</feature>
<feature type="region of interest" description="Disordered" evidence="2">
    <location>
        <begin position="37"/>
        <end position="101"/>
    </location>
</feature>
<feature type="region of interest" description="Interaction with RBPJ/RBPSUH" evidence="1">
    <location>
        <begin position="128"/>
        <end position="156"/>
    </location>
</feature>
<feature type="region of interest" description="Disordered" evidence="2">
    <location>
        <begin position="141"/>
        <end position="269"/>
    </location>
</feature>
<feature type="region of interest" description="Interaction with tubulin" evidence="1">
    <location>
        <begin position="156"/>
        <end position="269"/>
    </location>
</feature>
<feature type="short sequence motif" description="Nuclear export signal" evidence="1">
    <location>
        <begin position="5"/>
        <end position="17"/>
    </location>
</feature>
<feature type="short sequence motif" description="Nuclear localization signal" evidence="1">
    <location>
        <begin position="92"/>
        <end position="108"/>
    </location>
</feature>
<feature type="compositionally biased region" description="Polar residues" evidence="2">
    <location>
        <begin position="62"/>
        <end position="77"/>
    </location>
</feature>
<feature type="compositionally biased region" description="Low complexity" evidence="2">
    <location>
        <begin position="79"/>
        <end position="93"/>
    </location>
</feature>
<accession>D2HS03</accession>
<comment type="function">
    <text evidence="1">Tubulin-binding protein that acts as a negative regulator of Notch signaling pathway. Shuttles between the cytoplasm and the nucleus and mediates the nuclear export of RBPJ/RBPSUH, thereby preventing the interaction between RBPJ/RBPSUH and NICD product of Notch proteins (Notch intracellular domain), leading to down-regulate Notch-mediated transcription. May play a role in neurogenesis (By similarity).</text>
</comment>
<comment type="subunit">
    <text evidence="1">Interacts with RBPJ/RBPSUH.</text>
</comment>
<comment type="subcellular location">
    <subcellularLocation>
        <location evidence="1">Cytoplasm</location>
    </subcellularLocation>
    <subcellularLocation>
        <location evidence="1">Nucleus</location>
    </subcellularLocation>
    <subcellularLocation>
        <location evidence="1">Cytoplasm</location>
        <location evidence="1">Cytoskeleton</location>
        <location evidence="1">Microtubule organizing center</location>
        <location evidence="1">Centrosome</location>
    </subcellularLocation>
    <text evidence="1">Shuttles rapidly between the cytoplasm and the nucleus. The function of centrosome localization is still unclear (By similarity).</text>
</comment>
<comment type="similarity">
    <text evidence="3">Belongs to the RITA family.</text>
</comment>
<gene>
    <name type="primary">RITA1</name>
    <name type="synonym">RITA</name>
    <name type="ORF">PANDA_014816</name>
</gene>
<dbReference type="EMBL" id="GL193258">
    <property type="protein sequence ID" value="EFB19061.1"/>
    <property type="molecule type" value="Genomic_DNA"/>
</dbReference>
<dbReference type="STRING" id="9646.ENSAMEP00000009219"/>
<dbReference type="eggNOG" id="ENOG502S61Y">
    <property type="taxonomic scope" value="Eukaryota"/>
</dbReference>
<dbReference type="HOGENOM" id="CLU_062251_0_0_1"/>
<dbReference type="InParanoid" id="D2HS03"/>
<dbReference type="OMA" id="WEGPWMA"/>
<dbReference type="TreeFam" id="TF337291"/>
<dbReference type="Proteomes" id="UP000008912">
    <property type="component" value="Unassembled WGS sequence"/>
</dbReference>
<dbReference type="GO" id="GO:0005813">
    <property type="term" value="C:centrosome"/>
    <property type="evidence" value="ECO:0000250"/>
    <property type="project" value="UniProtKB"/>
</dbReference>
<dbReference type="GO" id="GO:0005737">
    <property type="term" value="C:cytoplasm"/>
    <property type="evidence" value="ECO:0000250"/>
    <property type="project" value="UniProtKB"/>
</dbReference>
<dbReference type="GO" id="GO:0005634">
    <property type="term" value="C:nucleus"/>
    <property type="evidence" value="ECO:0000250"/>
    <property type="project" value="UniProtKB"/>
</dbReference>
<dbReference type="GO" id="GO:0015631">
    <property type="term" value="F:tubulin binding"/>
    <property type="evidence" value="ECO:0000250"/>
    <property type="project" value="UniProtKB"/>
</dbReference>
<dbReference type="GO" id="GO:0045746">
    <property type="term" value="P:negative regulation of Notch signaling pathway"/>
    <property type="evidence" value="ECO:0000250"/>
    <property type="project" value="UniProtKB"/>
</dbReference>
<dbReference type="GO" id="GO:0022008">
    <property type="term" value="P:neurogenesis"/>
    <property type="evidence" value="ECO:0000250"/>
    <property type="project" value="UniProtKB"/>
</dbReference>
<dbReference type="GO" id="GO:0007219">
    <property type="term" value="P:Notch signaling pathway"/>
    <property type="evidence" value="ECO:0007669"/>
    <property type="project" value="UniProtKB-KW"/>
</dbReference>
<dbReference type="GO" id="GO:0051168">
    <property type="term" value="P:nuclear export"/>
    <property type="evidence" value="ECO:0007669"/>
    <property type="project" value="InterPro"/>
</dbReference>
<dbReference type="InterPro" id="IPR031418">
    <property type="entry name" value="RITA1"/>
</dbReference>
<dbReference type="PANTHER" id="PTHR34917">
    <property type="entry name" value="RBPJ-INTERACTING AND TUBULIN-ASSOCIATED PROTEIN 1"/>
    <property type="match status" value="1"/>
</dbReference>
<dbReference type="PANTHER" id="PTHR34917:SF1">
    <property type="entry name" value="RBPJ-INTERACTING AND TUBULIN-ASSOCIATED PROTEIN 1"/>
    <property type="match status" value="1"/>
</dbReference>
<dbReference type="Pfam" id="PF17066">
    <property type="entry name" value="RITA"/>
    <property type="match status" value="1"/>
</dbReference>
<organism>
    <name type="scientific">Ailuropoda melanoleuca</name>
    <name type="common">Giant panda</name>
    <dbReference type="NCBI Taxonomy" id="9646"/>
    <lineage>
        <taxon>Eukaryota</taxon>
        <taxon>Metazoa</taxon>
        <taxon>Chordata</taxon>
        <taxon>Craniata</taxon>
        <taxon>Vertebrata</taxon>
        <taxon>Euteleostomi</taxon>
        <taxon>Mammalia</taxon>
        <taxon>Eutheria</taxon>
        <taxon>Laurasiatheria</taxon>
        <taxon>Carnivora</taxon>
        <taxon>Caniformia</taxon>
        <taxon>Ursidae</taxon>
        <taxon>Ailuropoda</taxon>
    </lineage>
</organism>
<sequence>MKTPVELAVSGIQTLPLQHRCRGSHRVKARASYVDESLFGSPAGTRPTPPDFDPPWVEKANRTSGVGTGTSRASGANGSCETTSSSGSTPTLTPRKKNKYRLISHTPSYCDESLFGSRPEGTNWEGPWMAKGDAAKLHSLFWTPPATPRGSHSPRPRETPLRAIHPAGPSKTEPKVAADSQKLSTDGLDSPHPLRRERSHSLTHLNVPRTGRPPTSGPHTNGPRDPRPSPSGVTLQSPLVTPRARSVRISVPATPQRGGATQKPKPPWK</sequence>
<name>RITA1_AILME</name>
<reference key="1">
    <citation type="journal article" date="2010" name="Nature">
        <title>The sequence and de novo assembly of the giant panda genome.</title>
        <authorList>
            <person name="Li R."/>
            <person name="Fan W."/>
            <person name="Tian G."/>
            <person name="Zhu H."/>
            <person name="He L."/>
            <person name="Cai J."/>
            <person name="Huang Q."/>
            <person name="Cai Q."/>
            <person name="Li B."/>
            <person name="Bai Y."/>
            <person name="Zhang Z."/>
            <person name="Zhang Y."/>
            <person name="Wang W."/>
            <person name="Li J."/>
            <person name="Wei F."/>
            <person name="Li H."/>
            <person name="Jian M."/>
            <person name="Li J."/>
            <person name="Zhang Z."/>
            <person name="Nielsen R."/>
            <person name="Li D."/>
            <person name="Gu W."/>
            <person name="Yang Z."/>
            <person name="Xuan Z."/>
            <person name="Ryder O.A."/>
            <person name="Leung F.C."/>
            <person name="Zhou Y."/>
            <person name="Cao J."/>
            <person name="Sun X."/>
            <person name="Fu Y."/>
            <person name="Fang X."/>
            <person name="Guo X."/>
            <person name="Wang B."/>
            <person name="Hou R."/>
            <person name="Shen F."/>
            <person name="Mu B."/>
            <person name="Ni P."/>
            <person name="Lin R."/>
            <person name="Qian W."/>
            <person name="Wang G."/>
            <person name="Yu C."/>
            <person name="Nie W."/>
            <person name="Wang J."/>
            <person name="Wu Z."/>
            <person name="Liang H."/>
            <person name="Min J."/>
            <person name="Wu Q."/>
            <person name="Cheng S."/>
            <person name="Ruan J."/>
            <person name="Wang M."/>
            <person name="Shi Z."/>
            <person name="Wen M."/>
            <person name="Liu B."/>
            <person name="Ren X."/>
            <person name="Zheng H."/>
            <person name="Dong D."/>
            <person name="Cook K."/>
            <person name="Shan G."/>
            <person name="Zhang H."/>
            <person name="Kosiol C."/>
            <person name="Xie X."/>
            <person name="Lu Z."/>
            <person name="Zheng H."/>
            <person name="Li Y."/>
            <person name="Steiner C.C."/>
            <person name="Lam T.T."/>
            <person name="Lin S."/>
            <person name="Zhang Q."/>
            <person name="Li G."/>
            <person name="Tian J."/>
            <person name="Gong T."/>
            <person name="Liu H."/>
            <person name="Zhang D."/>
            <person name="Fang L."/>
            <person name="Ye C."/>
            <person name="Zhang J."/>
            <person name="Hu W."/>
            <person name="Xu A."/>
            <person name="Ren Y."/>
            <person name="Zhang G."/>
            <person name="Bruford M.W."/>
            <person name="Li Q."/>
            <person name="Ma L."/>
            <person name="Guo Y."/>
            <person name="An N."/>
            <person name="Hu Y."/>
            <person name="Zheng Y."/>
            <person name="Shi Y."/>
            <person name="Li Z."/>
            <person name="Liu Q."/>
            <person name="Chen Y."/>
            <person name="Zhao J."/>
            <person name="Qu N."/>
            <person name="Zhao S."/>
            <person name="Tian F."/>
            <person name="Wang X."/>
            <person name="Wang H."/>
            <person name="Xu L."/>
            <person name="Liu X."/>
            <person name="Vinar T."/>
            <person name="Wang Y."/>
            <person name="Lam T.W."/>
            <person name="Yiu S.M."/>
            <person name="Liu S."/>
            <person name="Zhang H."/>
            <person name="Li D."/>
            <person name="Huang Y."/>
            <person name="Wang X."/>
            <person name="Yang G."/>
            <person name="Jiang Z."/>
            <person name="Wang J."/>
            <person name="Qin N."/>
            <person name="Li L."/>
            <person name="Li J."/>
            <person name="Bolund L."/>
            <person name="Kristiansen K."/>
            <person name="Wong G.K."/>
            <person name="Olson M."/>
            <person name="Zhang X."/>
            <person name="Li S."/>
            <person name="Yang H."/>
            <person name="Wang J."/>
            <person name="Wang J."/>
        </authorList>
    </citation>
    <scope>NUCLEOTIDE SEQUENCE [LARGE SCALE GENOMIC DNA]</scope>
</reference>
<protein>
    <recommendedName>
        <fullName>RBPJ-interacting and tubulin-associated protein 1</fullName>
    </recommendedName>
    <alternativeName>
        <fullName>RBPJ-interacting and tubulin-associated protein</fullName>
    </alternativeName>
</protein>
<keyword id="KW-0963">Cytoplasm</keyword>
<keyword id="KW-0206">Cytoskeleton</keyword>
<keyword id="KW-0524">Neurogenesis</keyword>
<keyword id="KW-0914">Notch signaling pathway</keyword>
<keyword id="KW-0539">Nucleus</keyword>
<keyword id="KW-1185">Reference proteome</keyword>
<proteinExistence type="inferred from homology"/>